<accession>Q2FDM1</accession>
<evidence type="ECO:0000250" key="1"/>
<evidence type="ECO:0000305" key="2"/>
<keyword id="KW-0964">Secreted</keyword>
<keyword id="KW-0732">Signal</keyword>
<gene>
    <name type="primary">isaB</name>
    <name type="ordered locus">SAUSA300_2573</name>
</gene>
<name>ISAB_STAA3</name>
<reference key="1">
    <citation type="journal article" date="2006" name="Lancet">
        <title>Complete genome sequence of USA300, an epidemic clone of community-acquired meticillin-resistant Staphylococcus aureus.</title>
        <authorList>
            <person name="Diep B.A."/>
            <person name="Gill S.R."/>
            <person name="Chang R.F."/>
            <person name="Phan T.H."/>
            <person name="Chen J.H."/>
            <person name="Davidson M.G."/>
            <person name="Lin F."/>
            <person name="Lin J."/>
            <person name="Carleton H.A."/>
            <person name="Mongodin E.F."/>
            <person name="Sensabaugh G.F."/>
            <person name="Perdreau-Remington F."/>
        </authorList>
    </citation>
    <scope>NUCLEOTIDE SEQUENCE [LARGE SCALE GENOMIC DNA]</scope>
    <source>
        <strain>USA300</strain>
    </source>
</reference>
<protein>
    <recommendedName>
        <fullName>Immunodominant staphylococcal antigen B</fullName>
    </recommendedName>
</protein>
<feature type="signal peptide" evidence="1">
    <location>
        <begin position="1"/>
        <end position="36"/>
    </location>
</feature>
<feature type="chain" id="PRO_0000272662" description="Immunodominant staphylococcal antigen B">
    <location>
        <begin position="37"/>
        <end position="175"/>
    </location>
</feature>
<comment type="subcellular location">
    <subcellularLocation>
        <location evidence="1">Secreted</location>
    </subcellularLocation>
</comment>
<comment type="similarity">
    <text evidence="2">Belongs to the IsaB family.</text>
</comment>
<organism>
    <name type="scientific">Staphylococcus aureus (strain USA300)</name>
    <dbReference type="NCBI Taxonomy" id="367830"/>
    <lineage>
        <taxon>Bacteria</taxon>
        <taxon>Bacillati</taxon>
        <taxon>Bacillota</taxon>
        <taxon>Bacilli</taxon>
        <taxon>Bacillales</taxon>
        <taxon>Staphylococcaceae</taxon>
        <taxon>Staphylococcus</taxon>
    </lineage>
</organism>
<dbReference type="EMBL" id="CP000255">
    <property type="protein sequence ID" value="ABD21053.1"/>
    <property type="molecule type" value="Genomic_DNA"/>
</dbReference>
<dbReference type="RefSeq" id="WP_001044560.1">
    <property type="nucleotide sequence ID" value="NZ_CP027476.1"/>
</dbReference>
<dbReference type="SMR" id="Q2FDM1"/>
<dbReference type="KEGG" id="saa:SAUSA300_2573"/>
<dbReference type="HOGENOM" id="CLU_119552_0_0_9"/>
<dbReference type="OMA" id="WYKYNGY"/>
<dbReference type="Proteomes" id="UP000001939">
    <property type="component" value="Chromosome"/>
</dbReference>
<dbReference type="GO" id="GO:0005576">
    <property type="term" value="C:extracellular region"/>
    <property type="evidence" value="ECO:0007669"/>
    <property type="project" value="UniProtKB-SubCell"/>
</dbReference>
<dbReference type="NCBIfam" id="NF047686">
    <property type="entry name" value="IsaB_fam"/>
    <property type="match status" value="1"/>
</dbReference>
<sequence length="175" mass="19370">MNKTSKVCVAATLALGTLIGVTVVENSAPTSKQAQAAITPYYTYNGYIGNNANFILDKNFINAIKYDNVKFNGIKLAKTNTIKKVEKYDQTFKGVSAKGNEASQLQFVVKNNISLKDIQKAYGKDLKKENGKTKEADSGIFYYQNAKKTLGIWFVVDHNRVVEVTVGHTPYKTSK</sequence>
<proteinExistence type="inferred from homology"/>